<proteinExistence type="evidence at protein level"/>
<accession>P36673</accession>
<accession>Q2M666</accession>
<name>TRER_ECOLI</name>
<protein>
    <recommendedName>
        <fullName evidence="5">HTH-type transcriptional regulator TreR</fullName>
    </recommendedName>
    <alternativeName>
        <fullName evidence="5">Trehalose operon repressor</fullName>
    </alternativeName>
</protein>
<feature type="chain" id="PRO_0000108005" description="HTH-type transcriptional regulator TreR">
    <location>
        <begin position="1"/>
        <end position="315"/>
    </location>
</feature>
<feature type="domain" description="HTH lacI-type" evidence="1">
    <location>
        <begin position="5"/>
        <end position="59"/>
    </location>
</feature>
<feature type="DNA-binding region" description="H-T-H motif" evidence="1">
    <location>
        <begin position="7"/>
        <end position="26"/>
    </location>
</feature>
<feature type="binding site" evidence="4">
    <location>
        <begin position="71"/>
        <end position="77"/>
    </location>
    <ligand>
        <name>alpha,alpha-trehalose 6-phosphate</name>
        <dbReference type="ChEBI" id="CHEBI:58429"/>
    </ligand>
</feature>
<feature type="binding site" evidence="4">
    <location>
        <position position="126"/>
    </location>
    <ligand>
        <name>alpha,alpha-trehalose 6-phosphate</name>
        <dbReference type="ChEBI" id="CHEBI:58429"/>
    </ligand>
</feature>
<feature type="binding site" evidence="4">
    <location>
        <position position="147"/>
    </location>
    <ligand>
        <name>alpha,alpha-trehalose 6-phosphate</name>
        <dbReference type="ChEBI" id="CHEBI:58429"/>
    </ligand>
</feature>
<feature type="binding site" evidence="4">
    <location>
        <begin position="187"/>
        <end position="190"/>
    </location>
    <ligand>
        <name>alpha,alpha-trehalose 6-phosphate</name>
        <dbReference type="ChEBI" id="CHEBI:58429"/>
    </ligand>
</feature>
<feature type="binding site" evidence="4">
    <location>
        <position position="194"/>
    </location>
    <ligand>
        <name>alpha,alpha-trehalose 6-phosphate</name>
        <dbReference type="ChEBI" id="CHEBI:58429"/>
    </ligand>
</feature>
<feature type="binding site" evidence="4">
    <location>
        <position position="242"/>
    </location>
    <ligand>
        <name>alpha,alpha-trehalose 6-phosphate</name>
        <dbReference type="ChEBI" id="CHEBI:58429"/>
    </ligand>
</feature>
<feature type="binding site" evidence="4">
    <location>
        <position position="284"/>
    </location>
    <ligand>
        <name>alpha,alpha-trehalose 6-phosphate</name>
        <dbReference type="ChEBI" id="CHEBI:58429"/>
    </ligand>
</feature>
<feature type="strand" evidence="7">
    <location>
        <begin position="64"/>
        <end position="70"/>
    </location>
</feature>
<feature type="helix" evidence="7">
    <location>
        <begin position="75"/>
        <end position="91"/>
    </location>
</feature>
<feature type="strand" evidence="7">
    <location>
        <begin position="94"/>
        <end position="99"/>
    </location>
</feature>
<feature type="helix" evidence="7">
    <location>
        <begin position="104"/>
        <end position="116"/>
    </location>
</feature>
<feature type="strand" evidence="7">
    <location>
        <begin position="120"/>
        <end position="125"/>
    </location>
</feature>
<feature type="turn" evidence="7">
    <location>
        <begin position="132"/>
        <end position="135"/>
    </location>
</feature>
<feature type="helix" evidence="7">
    <location>
        <begin position="136"/>
        <end position="138"/>
    </location>
</feature>
<feature type="strand" evidence="7">
    <location>
        <begin position="141"/>
        <end position="147"/>
    </location>
</feature>
<feature type="strand" evidence="7">
    <location>
        <begin position="152"/>
        <end position="157"/>
    </location>
</feature>
<feature type="helix" evidence="7">
    <location>
        <begin position="159"/>
        <end position="172"/>
    </location>
</feature>
<feature type="strand" evidence="7">
    <location>
        <begin position="178"/>
        <end position="181"/>
    </location>
</feature>
<feature type="turn" evidence="7">
    <location>
        <begin position="188"/>
        <end position="191"/>
    </location>
</feature>
<feature type="helix" evidence="7">
    <location>
        <begin position="192"/>
        <end position="204"/>
    </location>
</feature>
<feature type="strand" evidence="7">
    <location>
        <begin position="210"/>
        <end position="212"/>
    </location>
</feature>
<feature type="helix" evidence="7">
    <location>
        <begin position="218"/>
        <end position="224"/>
    </location>
</feature>
<feature type="helix" evidence="7">
    <location>
        <begin position="225"/>
        <end position="228"/>
    </location>
</feature>
<feature type="strand" evidence="7">
    <location>
        <begin position="235"/>
        <end position="240"/>
    </location>
</feature>
<feature type="helix" evidence="7">
    <location>
        <begin position="241"/>
        <end position="253"/>
    </location>
</feature>
<feature type="strand" evidence="7">
    <location>
        <begin position="260"/>
        <end position="264"/>
    </location>
</feature>
<feature type="helix" evidence="7">
    <location>
        <begin position="268"/>
        <end position="273"/>
    </location>
</feature>
<feature type="strand" evidence="7">
    <location>
        <begin position="277"/>
        <end position="281"/>
    </location>
</feature>
<feature type="helix" evidence="7">
    <location>
        <begin position="284"/>
        <end position="299"/>
    </location>
</feature>
<feature type="strand" evidence="7">
    <location>
        <begin position="307"/>
        <end position="310"/>
    </location>
</feature>
<comment type="function">
    <text evidence="2 3">Repressor of the treBC operon. It is able to bind trehalose-6-phosphate and trehalose.</text>
</comment>
<comment type="subunit">
    <text evidence="3 4">Homodimer.</text>
</comment>
<comment type="induction">
    <text evidence="6">Probably induced by trehalose-6-phosphate.</text>
</comment>
<comment type="disruption phenotype">
    <text evidence="2">Cells lacking this gene are constitutive in the expression of the treBC operon.</text>
</comment>
<reference key="1">
    <citation type="journal article" date="1997" name="J. Biol. Chem.">
        <title>Characterization of TreR, the major regulator of the Escherichia coli trehalose system.</title>
        <authorList>
            <person name="Horlacher R."/>
            <person name="Boos W."/>
        </authorList>
    </citation>
    <scope>NUCLEOTIDE SEQUENCE [GENOMIC DNA]</scope>
    <scope>FUNCTION</scope>
    <scope>SUBUNIT</scope>
    <scope>SUBSTRATE SPECIFICITY</scope>
    <source>
        <strain>K12</strain>
    </source>
</reference>
<reference key="2">
    <citation type="journal article" date="1995" name="Nucleic Acids Res.">
        <title>Analysis of the Escherichia coli genome VI: DNA sequence of the region from 92.8 through 100 minutes.</title>
        <authorList>
            <person name="Burland V.D."/>
            <person name="Plunkett G. III"/>
            <person name="Sofia H.J."/>
            <person name="Daniels D.L."/>
            <person name="Blattner F.R."/>
        </authorList>
    </citation>
    <scope>NUCLEOTIDE SEQUENCE [LARGE SCALE GENOMIC DNA]</scope>
    <source>
        <strain>K12 / MG1655 / ATCC 47076</strain>
    </source>
</reference>
<reference key="3">
    <citation type="journal article" date="1997" name="Science">
        <title>The complete genome sequence of Escherichia coli K-12.</title>
        <authorList>
            <person name="Blattner F.R."/>
            <person name="Plunkett G. III"/>
            <person name="Bloch C.A."/>
            <person name="Perna N.T."/>
            <person name="Burland V."/>
            <person name="Riley M."/>
            <person name="Collado-Vides J."/>
            <person name="Glasner J.D."/>
            <person name="Rode C.K."/>
            <person name="Mayhew G.F."/>
            <person name="Gregor J."/>
            <person name="Davis N.W."/>
            <person name="Kirkpatrick H.A."/>
            <person name="Goeden M.A."/>
            <person name="Rose D.J."/>
            <person name="Mau B."/>
            <person name="Shao Y."/>
        </authorList>
    </citation>
    <scope>NUCLEOTIDE SEQUENCE [LARGE SCALE GENOMIC DNA]</scope>
    <source>
        <strain>K12 / MG1655 / ATCC 47076</strain>
    </source>
</reference>
<reference key="4">
    <citation type="journal article" date="2006" name="Mol. Syst. Biol.">
        <title>Highly accurate genome sequences of Escherichia coli K-12 strains MG1655 and W3110.</title>
        <authorList>
            <person name="Hayashi K."/>
            <person name="Morooka N."/>
            <person name="Yamamoto Y."/>
            <person name="Fujita K."/>
            <person name="Isono K."/>
            <person name="Choi S."/>
            <person name="Ohtsubo E."/>
            <person name="Baba T."/>
            <person name="Wanner B.L."/>
            <person name="Mori H."/>
            <person name="Horiuchi T."/>
        </authorList>
    </citation>
    <scope>NUCLEOTIDE SEQUENCE [LARGE SCALE GENOMIC DNA]</scope>
    <source>
        <strain>K12 / W3110 / ATCC 27325 / DSM 5911</strain>
    </source>
</reference>
<reference key="5">
    <citation type="journal article" date="1995" name="J. Bacteriol.">
        <title>Molecular analysis of treB encoding the Escherichia coli enzyme II specific for trehalose.</title>
        <authorList>
            <person name="Klein W."/>
            <person name="Horlacher R."/>
            <person name="Boos W."/>
        </authorList>
    </citation>
    <scope>NUCLEOTIDE SEQUENCE [GENOMIC DNA] OF 307-315</scope>
    <scope>FUNCTION</scope>
    <scope>DISRUPTION PHENOTYPE</scope>
    <scope>INDUCTION</scope>
    <source>
        <strain>K12</strain>
    </source>
</reference>
<reference key="6">
    <citation type="journal article" date="1998" name="Protein Sci.">
        <title>Crystal structure of the effector-binding domain of the trehalose-repressor of Escherichia coli, a member of the LacI family, in its complexes with inducer trehalose-6-phosphate and noninducer trehalose.</title>
        <authorList>
            <person name="Hars U."/>
            <person name="Horlacher R."/>
            <person name="Boos W."/>
            <person name="Welte W."/>
            <person name="Diederichs K."/>
        </authorList>
    </citation>
    <scope>X-RAY CRYSTALLOGRAPHY (2.4 ANGSTROMS) IN COMPLEX WITH TREHALOSE-6-PHOSPHATE</scope>
    <scope>SUBUNIT</scope>
</reference>
<evidence type="ECO:0000255" key="1">
    <source>
        <dbReference type="PROSITE-ProRule" id="PRU00111"/>
    </source>
</evidence>
<evidence type="ECO:0000269" key="2">
    <source>
    </source>
</evidence>
<evidence type="ECO:0000269" key="3">
    <source>
    </source>
</evidence>
<evidence type="ECO:0000269" key="4">
    <source>
    </source>
</evidence>
<evidence type="ECO:0000303" key="5">
    <source>
    </source>
</evidence>
<evidence type="ECO:0000305" key="6">
    <source>
    </source>
</evidence>
<evidence type="ECO:0007829" key="7">
    <source>
        <dbReference type="PDB" id="4XXH"/>
    </source>
</evidence>
<sequence>MQNRLTIKDIARLSGVGKSTVSRVLNNESGVSQLTRERVEAVMNQHGFSPSRSARAMRGQSDKVVAIIVTRLDSLSENLAVQTMLPAFYEQGYDPIMMESQFSPQLVAEHLGVLKRRNIDGVVLFGFTGITEEMLAHWQSSLVLLARDAKGFASVCYDDEGAIKILMQRLYDQGHRNISYLGVPHSDVTTGKRRHEAYLAFCKAHKLHPVAALPGLAMKQGYENVAKVITPETTALLCATDTLALGASKYLQEQRIDTLQLASVGNTPLMKFLHPEIVTVDPGYAEAGRQAACQLIAQVTGRSEPQQIIIPATLS</sequence>
<keyword id="KW-0002">3D-structure</keyword>
<keyword id="KW-0238">DNA-binding</keyword>
<keyword id="KW-1185">Reference proteome</keyword>
<keyword id="KW-0678">Repressor</keyword>
<keyword id="KW-0804">Transcription</keyword>
<keyword id="KW-0805">Transcription regulation</keyword>
<organism>
    <name type="scientific">Escherichia coli (strain K12)</name>
    <dbReference type="NCBI Taxonomy" id="83333"/>
    <lineage>
        <taxon>Bacteria</taxon>
        <taxon>Pseudomonadati</taxon>
        <taxon>Pseudomonadota</taxon>
        <taxon>Gammaproteobacteria</taxon>
        <taxon>Enterobacterales</taxon>
        <taxon>Enterobacteriaceae</taxon>
        <taxon>Escherichia</taxon>
    </lineage>
</organism>
<dbReference type="EMBL" id="U07790">
    <property type="protein sequence ID" value="AAB47715.1"/>
    <property type="molecule type" value="Unassigned_DNA"/>
</dbReference>
<dbReference type="EMBL" id="U14003">
    <property type="protein sequence ID" value="AAA97138.1"/>
    <property type="molecule type" value="Genomic_DNA"/>
</dbReference>
<dbReference type="EMBL" id="U00096">
    <property type="protein sequence ID" value="AAC77198.1"/>
    <property type="molecule type" value="Genomic_DNA"/>
</dbReference>
<dbReference type="EMBL" id="AP009048">
    <property type="protein sequence ID" value="BAE78240.1"/>
    <property type="molecule type" value="Genomic_DNA"/>
</dbReference>
<dbReference type="EMBL" id="U06195">
    <property type="status" value="NOT_ANNOTATED_CDS"/>
    <property type="molecule type" value="Genomic_DNA"/>
</dbReference>
<dbReference type="PIR" id="S56467">
    <property type="entry name" value="S56467"/>
</dbReference>
<dbReference type="RefSeq" id="NP_418662.1">
    <property type="nucleotide sequence ID" value="NC_000913.3"/>
</dbReference>
<dbReference type="RefSeq" id="WP_001181307.1">
    <property type="nucleotide sequence ID" value="NZ_LN832404.1"/>
</dbReference>
<dbReference type="PDB" id="4XXH">
    <property type="method" value="X-ray"/>
    <property type="resolution" value="2.40 A"/>
    <property type="chains" value="A/B=61-315"/>
</dbReference>
<dbReference type="PDBsum" id="4XXH"/>
<dbReference type="SMR" id="P36673"/>
<dbReference type="BioGRID" id="4260956">
    <property type="interactions" value="118"/>
</dbReference>
<dbReference type="BioGRID" id="853049">
    <property type="interactions" value="2"/>
</dbReference>
<dbReference type="DIP" id="DIP-11026N"/>
<dbReference type="FunCoup" id="P36673">
    <property type="interactions" value="105"/>
</dbReference>
<dbReference type="IntAct" id="P36673">
    <property type="interactions" value="10"/>
</dbReference>
<dbReference type="STRING" id="511145.b4241"/>
<dbReference type="DrugBank" id="DB02430">
    <property type="generic name" value="Trehalose-6-Phosphate"/>
</dbReference>
<dbReference type="jPOST" id="P36673"/>
<dbReference type="PaxDb" id="511145-b4241"/>
<dbReference type="EnsemblBacteria" id="AAC77198">
    <property type="protein sequence ID" value="AAC77198"/>
    <property type="gene ID" value="b4241"/>
</dbReference>
<dbReference type="GeneID" id="948760"/>
<dbReference type="KEGG" id="ecj:JW4200"/>
<dbReference type="KEGG" id="eco:b4241"/>
<dbReference type="KEGG" id="ecoc:C3026_22890"/>
<dbReference type="PATRIC" id="fig|1411691.4.peg.2460"/>
<dbReference type="EchoBASE" id="EB2118"/>
<dbReference type="eggNOG" id="COG1609">
    <property type="taxonomic scope" value="Bacteria"/>
</dbReference>
<dbReference type="HOGENOM" id="CLU_037628_9_0_6"/>
<dbReference type="InParanoid" id="P36673"/>
<dbReference type="OMA" id="HISFLGV"/>
<dbReference type="OrthoDB" id="198888at2"/>
<dbReference type="PhylomeDB" id="P36673"/>
<dbReference type="BioCyc" id="EcoCyc:EG12202-MONOMER"/>
<dbReference type="EvolutionaryTrace" id="P36673"/>
<dbReference type="PRO" id="PR:P36673"/>
<dbReference type="Proteomes" id="UP000000625">
    <property type="component" value="Chromosome"/>
</dbReference>
<dbReference type="GO" id="GO:0003700">
    <property type="term" value="F:DNA-binding transcription factor activity"/>
    <property type="evidence" value="ECO:0000314"/>
    <property type="project" value="EcoCyc"/>
</dbReference>
<dbReference type="GO" id="GO:0000976">
    <property type="term" value="F:transcription cis-regulatory region binding"/>
    <property type="evidence" value="ECO:0000318"/>
    <property type="project" value="GO_Central"/>
</dbReference>
<dbReference type="GO" id="GO:0045892">
    <property type="term" value="P:negative regulation of DNA-templated transcription"/>
    <property type="evidence" value="ECO:0000314"/>
    <property type="project" value="EcoCyc"/>
</dbReference>
<dbReference type="GO" id="GO:0006355">
    <property type="term" value="P:regulation of DNA-templated transcription"/>
    <property type="evidence" value="ECO:0000318"/>
    <property type="project" value="GO_Central"/>
</dbReference>
<dbReference type="GO" id="GO:0005991">
    <property type="term" value="P:trehalose metabolic process"/>
    <property type="evidence" value="ECO:0007669"/>
    <property type="project" value="InterPro"/>
</dbReference>
<dbReference type="CDD" id="cd01392">
    <property type="entry name" value="HTH_LacI"/>
    <property type="match status" value="1"/>
</dbReference>
<dbReference type="CDD" id="cd01542">
    <property type="entry name" value="PBP1_TreR-like"/>
    <property type="match status" value="1"/>
</dbReference>
<dbReference type="FunFam" id="1.10.260.40:FF:000021">
    <property type="entry name" value="Trehalose operon repressor"/>
    <property type="match status" value="1"/>
</dbReference>
<dbReference type="FunFam" id="3.40.50.2300:FF:000239">
    <property type="entry name" value="Trehalose operon repressor"/>
    <property type="match status" value="1"/>
</dbReference>
<dbReference type="Gene3D" id="3.40.50.2300">
    <property type="match status" value="2"/>
</dbReference>
<dbReference type="Gene3D" id="1.10.260.40">
    <property type="entry name" value="lambda repressor-like DNA-binding domains"/>
    <property type="match status" value="1"/>
</dbReference>
<dbReference type="InterPro" id="IPR000843">
    <property type="entry name" value="HTH_LacI"/>
</dbReference>
<dbReference type="InterPro" id="IPR046335">
    <property type="entry name" value="LacI/GalR-like_sensor"/>
</dbReference>
<dbReference type="InterPro" id="IPR010982">
    <property type="entry name" value="Lambda_DNA-bd_dom_sf"/>
</dbReference>
<dbReference type="InterPro" id="IPR028082">
    <property type="entry name" value="Peripla_BP_I"/>
</dbReference>
<dbReference type="InterPro" id="IPR012771">
    <property type="entry name" value="Trehalos_R_gpbac"/>
</dbReference>
<dbReference type="NCBIfam" id="TIGR02405">
    <property type="entry name" value="trehalos_R_Ecol"/>
    <property type="match status" value="1"/>
</dbReference>
<dbReference type="PANTHER" id="PTHR30146:SF146">
    <property type="entry name" value="HTH-TYPE TRANSCRIPTIONAL REGULATOR TRER"/>
    <property type="match status" value="1"/>
</dbReference>
<dbReference type="PANTHER" id="PTHR30146">
    <property type="entry name" value="LACI-RELATED TRANSCRIPTIONAL REPRESSOR"/>
    <property type="match status" value="1"/>
</dbReference>
<dbReference type="Pfam" id="PF00356">
    <property type="entry name" value="LacI"/>
    <property type="match status" value="1"/>
</dbReference>
<dbReference type="Pfam" id="PF13377">
    <property type="entry name" value="Peripla_BP_3"/>
    <property type="match status" value="1"/>
</dbReference>
<dbReference type="PRINTS" id="PR00036">
    <property type="entry name" value="HTHLACI"/>
</dbReference>
<dbReference type="SMART" id="SM00354">
    <property type="entry name" value="HTH_LACI"/>
    <property type="match status" value="1"/>
</dbReference>
<dbReference type="SUPFAM" id="SSF47413">
    <property type="entry name" value="lambda repressor-like DNA-binding domains"/>
    <property type="match status" value="1"/>
</dbReference>
<dbReference type="SUPFAM" id="SSF53822">
    <property type="entry name" value="Periplasmic binding protein-like I"/>
    <property type="match status" value="1"/>
</dbReference>
<dbReference type="PROSITE" id="PS00356">
    <property type="entry name" value="HTH_LACI_1"/>
    <property type="match status" value="1"/>
</dbReference>
<dbReference type="PROSITE" id="PS50932">
    <property type="entry name" value="HTH_LACI_2"/>
    <property type="match status" value="1"/>
</dbReference>
<gene>
    <name type="primary">treR</name>
    <name type="ordered locus">b4241</name>
    <name type="ordered locus">JW4200</name>
</gene>